<reference key="1">
    <citation type="journal article" date="1990" name="Mol. Microbiol.">
        <title>Characterization of the type 1 fimbrial subunit gene (fimA) of Serratia marcescens.</title>
        <authorList>
            <person name="Nichols W.A."/>
            <person name="Clegg S."/>
            <person name="Brown M.R."/>
        </authorList>
    </citation>
    <scope>NUCLEOTIDE SEQUENCE [GENOMIC DNA]</scope>
    <source>
        <strain>IA506</strain>
    </source>
</reference>
<organism>
    <name type="scientific">Serratia marcescens</name>
    <dbReference type="NCBI Taxonomy" id="615"/>
    <lineage>
        <taxon>Bacteria</taxon>
        <taxon>Pseudomonadati</taxon>
        <taxon>Pseudomonadota</taxon>
        <taxon>Gammaproteobacteria</taxon>
        <taxon>Enterobacterales</taxon>
        <taxon>Yersiniaceae</taxon>
        <taxon>Serratia</taxon>
    </lineage>
</organism>
<accession>P22595</accession>
<proteinExistence type="inferred from homology"/>
<gene>
    <name type="primary">fimA</name>
</gene>
<name>FIMA1_SERMA</name>
<dbReference type="EMBL" id="X55025">
    <property type="protein sequence ID" value="CAA38764.1"/>
    <property type="molecule type" value="Genomic_DNA"/>
</dbReference>
<dbReference type="PIR" id="S12398">
    <property type="entry name" value="YQSE1"/>
</dbReference>
<dbReference type="RefSeq" id="WP_033647475.1">
    <property type="nucleotide sequence ID" value="NZ_WVHW01000013.1"/>
</dbReference>
<dbReference type="SMR" id="P22595"/>
<dbReference type="PATRIC" id="fig|615.101.peg.21"/>
<dbReference type="GO" id="GO:0009289">
    <property type="term" value="C:pilus"/>
    <property type="evidence" value="ECO:0007669"/>
    <property type="project" value="UniProtKB-SubCell"/>
</dbReference>
<dbReference type="GO" id="GO:0043709">
    <property type="term" value="P:cell adhesion involved in single-species biofilm formation"/>
    <property type="evidence" value="ECO:0007669"/>
    <property type="project" value="TreeGrafter"/>
</dbReference>
<dbReference type="Gene3D" id="2.60.40.1090">
    <property type="entry name" value="Fimbrial-type adhesion domain"/>
    <property type="match status" value="1"/>
</dbReference>
<dbReference type="InterPro" id="IPR000259">
    <property type="entry name" value="Adhesion_dom_fimbrial"/>
</dbReference>
<dbReference type="InterPro" id="IPR036937">
    <property type="entry name" value="Adhesion_dom_fimbrial_sf"/>
</dbReference>
<dbReference type="InterPro" id="IPR008966">
    <property type="entry name" value="Adhesion_dom_sf"/>
</dbReference>
<dbReference type="InterPro" id="IPR050263">
    <property type="entry name" value="Bact_Fimbrial_Adh_Pro"/>
</dbReference>
<dbReference type="PANTHER" id="PTHR33420:SF3">
    <property type="entry name" value="FIMBRIAL SUBUNIT ELFA"/>
    <property type="match status" value="1"/>
</dbReference>
<dbReference type="PANTHER" id="PTHR33420">
    <property type="entry name" value="FIMBRIAL SUBUNIT ELFA-RELATED"/>
    <property type="match status" value="1"/>
</dbReference>
<dbReference type="Pfam" id="PF00419">
    <property type="entry name" value="Fimbrial"/>
    <property type="match status" value="1"/>
</dbReference>
<dbReference type="SUPFAM" id="SSF49401">
    <property type="entry name" value="Bacterial adhesins"/>
    <property type="match status" value="1"/>
</dbReference>
<protein>
    <recommendedName>
        <fullName>Type-1 fimbrial protein subunit</fullName>
    </recommendedName>
</protein>
<sequence length="180" mass="18546">MKKVLLPLAALVLSATASNAMAANGTVKFTGEIKQSTCQVTSDTQNKEVYLGTYPTSAFPTVGSKSASKAFQISLEKCDAGDYSLRFDGNTVAGNPDLLSVSNVGGTGAAATGVGIEITDNNGKPFAIGDGSNINDDVAKVTIAADGKATFNLQARYRSFDSNVTAGLANATSPFTIEYK</sequence>
<evidence type="ECO:0000255" key="1"/>
<evidence type="ECO:0000305" key="2"/>
<keyword id="KW-1015">Disulfide bond</keyword>
<keyword id="KW-0281">Fimbrium</keyword>
<keyword id="KW-0732">Signal</keyword>
<feature type="signal peptide" evidence="1">
    <location>
        <begin position="1"/>
        <end position="22"/>
    </location>
</feature>
<feature type="chain" id="PRO_0000009177" description="Type-1 fimbrial protein subunit">
    <location>
        <begin position="23"/>
        <end position="180"/>
    </location>
</feature>
<feature type="disulfide bond" evidence="1">
    <location>
        <begin position="38"/>
        <end position="78"/>
    </location>
</feature>
<comment type="function">
    <text>Fimbriae (also called pili), polar filaments radiating from the surface of the bacterium to a length of 0.5-1.5 micrometers and numbering 100-300 per cell, enable bacteria to colonize the epithelium of specific host organs.</text>
</comment>
<comment type="subcellular location">
    <subcellularLocation>
        <location>Fimbrium</location>
    </subcellularLocation>
</comment>
<comment type="similarity">
    <text evidence="2">Belongs to the fimbrial protein family.</text>
</comment>